<feature type="chain" id="PRO_0000158624" description="Ribosomal RNA small subunit methyltransferase Nep1">
    <location>
        <begin position="1"/>
        <end position="222"/>
    </location>
</feature>
<feature type="binding site" evidence="1">
    <location>
        <position position="177"/>
    </location>
    <ligand>
        <name>S-adenosyl-L-methionine</name>
        <dbReference type="ChEBI" id="CHEBI:59789"/>
    </ligand>
</feature>
<feature type="binding site" evidence="1">
    <location>
        <position position="182"/>
    </location>
    <ligand>
        <name>S-adenosyl-L-methionine</name>
        <dbReference type="ChEBI" id="CHEBI:59789"/>
    </ligand>
</feature>
<feature type="binding site" evidence="1">
    <location>
        <begin position="197"/>
        <end position="202"/>
    </location>
    <ligand>
        <name>S-adenosyl-L-methionine</name>
        <dbReference type="ChEBI" id="CHEBI:59789"/>
    </ligand>
</feature>
<feature type="site" description="Interaction with substrate rRNA" evidence="1">
    <location>
        <position position="62"/>
    </location>
</feature>
<feature type="site" description="Stabilizes Arg-62" evidence="1">
    <location>
        <position position="64"/>
    </location>
</feature>
<feature type="site" description="Interaction with substrate rRNA" evidence="1">
    <location>
        <position position="103"/>
    </location>
</feature>
<feature type="site" description="Interaction with substrate rRNA" evidence="1">
    <location>
        <position position="106"/>
    </location>
</feature>
<feature type="site" description="Interaction with substrate rRNA" evidence="1">
    <location>
        <position position="110"/>
    </location>
</feature>
<dbReference type="EC" id="2.1.1.-" evidence="1"/>
<dbReference type="EMBL" id="AL445066">
    <property type="protein sequence ID" value="CAC12251.1"/>
    <property type="status" value="ALT_INIT"/>
    <property type="molecule type" value="Genomic_DNA"/>
</dbReference>
<dbReference type="RefSeq" id="WP_010901534.1">
    <property type="nucleotide sequence ID" value="NC_002578.1"/>
</dbReference>
<dbReference type="SMR" id="Q9HJ48"/>
<dbReference type="FunCoup" id="Q9HJ48">
    <property type="interactions" value="124"/>
</dbReference>
<dbReference type="STRING" id="273075.gene:9572347"/>
<dbReference type="PaxDb" id="273075-Ta1124m"/>
<dbReference type="EnsemblBacteria" id="CAC12251">
    <property type="protein sequence ID" value="CAC12251"/>
    <property type="gene ID" value="CAC12251"/>
</dbReference>
<dbReference type="KEGG" id="tac:Ta1124"/>
<dbReference type="eggNOG" id="arCOG04122">
    <property type="taxonomic scope" value="Archaea"/>
</dbReference>
<dbReference type="HOGENOM" id="CLU_055846_1_3_2"/>
<dbReference type="InParanoid" id="Q9HJ48"/>
<dbReference type="OrthoDB" id="7612at2157"/>
<dbReference type="Proteomes" id="UP000001024">
    <property type="component" value="Chromosome"/>
</dbReference>
<dbReference type="GO" id="GO:0070037">
    <property type="term" value="F:rRNA (pseudouridine) methyltransferase activity"/>
    <property type="evidence" value="ECO:0007669"/>
    <property type="project" value="UniProtKB-UniRule"/>
</dbReference>
<dbReference type="GO" id="GO:0019843">
    <property type="term" value="F:rRNA binding"/>
    <property type="evidence" value="ECO:0007669"/>
    <property type="project" value="UniProtKB-UniRule"/>
</dbReference>
<dbReference type="GO" id="GO:0070475">
    <property type="term" value="P:rRNA base methylation"/>
    <property type="evidence" value="ECO:0007669"/>
    <property type="project" value="InterPro"/>
</dbReference>
<dbReference type="CDD" id="cd18088">
    <property type="entry name" value="Nep1-like"/>
    <property type="match status" value="1"/>
</dbReference>
<dbReference type="Gene3D" id="3.40.1280.10">
    <property type="match status" value="1"/>
</dbReference>
<dbReference type="HAMAP" id="MF_00554">
    <property type="entry name" value="NEP1"/>
    <property type="match status" value="1"/>
</dbReference>
<dbReference type="InterPro" id="IPR029028">
    <property type="entry name" value="Alpha/beta_knot_MTases"/>
</dbReference>
<dbReference type="InterPro" id="IPR005304">
    <property type="entry name" value="Rbsml_bgen_MeTrfase_EMG1/NEP1"/>
</dbReference>
<dbReference type="InterPro" id="IPR023503">
    <property type="entry name" value="Ribosome_NEP1_arc"/>
</dbReference>
<dbReference type="InterPro" id="IPR029026">
    <property type="entry name" value="tRNA_m1G_MTases_N"/>
</dbReference>
<dbReference type="NCBIfam" id="NF003204">
    <property type="entry name" value="PRK04171.1-3"/>
    <property type="match status" value="1"/>
</dbReference>
<dbReference type="PANTHER" id="PTHR12636">
    <property type="entry name" value="NEP1/MRA1"/>
    <property type="match status" value="1"/>
</dbReference>
<dbReference type="PANTHER" id="PTHR12636:SF5">
    <property type="entry name" value="RIBOSOMAL RNA SMALL SUBUNIT METHYLTRANSFERASE NEP1"/>
    <property type="match status" value="1"/>
</dbReference>
<dbReference type="Pfam" id="PF03587">
    <property type="entry name" value="EMG1"/>
    <property type="match status" value="1"/>
</dbReference>
<dbReference type="SUPFAM" id="SSF75217">
    <property type="entry name" value="alpha/beta knot"/>
    <property type="match status" value="1"/>
</dbReference>
<keyword id="KW-0489">Methyltransferase</keyword>
<keyword id="KW-1185">Reference proteome</keyword>
<keyword id="KW-0690">Ribosome biogenesis</keyword>
<keyword id="KW-0694">RNA-binding</keyword>
<keyword id="KW-0698">rRNA processing</keyword>
<keyword id="KW-0699">rRNA-binding</keyword>
<keyword id="KW-0949">S-adenosyl-L-methionine</keyword>
<keyword id="KW-0808">Transferase</keyword>
<protein>
    <recommendedName>
        <fullName evidence="1">Ribosomal RNA small subunit methyltransferase Nep1</fullName>
        <ecNumber evidence="1">2.1.1.-</ecNumber>
    </recommendedName>
    <alternativeName>
        <fullName evidence="1">16S rRNA (pseudouridine-N1-)-methyltransferase Nep1</fullName>
    </alternativeName>
</protein>
<name>NEP1_THEAC</name>
<accession>Q9HJ48</accession>
<evidence type="ECO:0000255" key="1">
    <source>
        <dbReference type="HAMAP-Rule" id="MF_00554"/>
    </source>
</evidence>
<evidence type="ECO:0000305" key="2"/>
<gene>
    <name type="primary">nep1</name>
    <name type="ordered locus">Ta1124</name>
</gene>
<reference key="1">
    <citation type="journal article" date="2000" name="Nature">
        <title>The genome sequence of the thermoacidophilic scavenger Thermoplasma acidophilum.</title>
        <authorList>
            <person name="Ruepp A."/>
            <person name="Graml W."/>
            <person name="Santos-Martinez M.-L."/>
            <person name="Koretke K.K."/>
            <person name="Volker C."/>
            <person name="Mewes H.-W."/>
            <person name="Frishman D."/>
            <person name="Stocker S."/>
            <person name="Lupas A.N."/>
            <person name="Baumeister W."/>
        </authorList>
    </citation>
    <scope>NUCLEOTIDE SEQUENCE [LARGE SCALE GENOMIC DNA]</scope>
    <source>
        <strain>ATCC 25905 / DSM 1728 / JCM 9062 / NBRC 15155 / AMRC-C165</strain>
    </source>
</reference>
<sequence length="222" mass="25939">MLHLVIADAELETIPEEMQADPAIRRFAKKRNKRVDRMILDSNYMHTSIDRYFPNESKRRGRPDIIYLLLEMTQESILNHKNQLRTYVHTRNNQVIRISPITRMPKSYNRFIGLFEDLFEKRIITNNGKELLSMEESSLGDLINSIRRDRTILLHPKGEMRKPSEFISNANILIVIGGFSEGDFISDTSFINERYAIFDQELTIWSVANEMVANYERAVGLT</sequence>
<organism>
    <name type="scientific">Thermoplasma acidophilum (strain ATCC 25905 / DSM 1728 / JCM 9062 / NBRC 15155 / AMRC-C165)</name>
    <dbReference type="NCBI Taxonomy" id="273075"/>
    <lineage>
        <taxon>Archaea</taxon>
        <taxon>Methanobacteriati</taxon>
        <taxon>Thermoplasmatota</taxon>
        <taxon>Thermoplasmata</taxon>
        <taxon>Thermoplasmatales</taxon>
        <taxon>Thermoplasmataceae</taxon>
        <taxon>Thermoplasma</taxon>
    </lineage>
</organism>
<proteinExistence type="inferred from homology"/>
<comment type="function">
    <text evidence="1">Methyltransferase involved in ribosomal biogenesis. Specifically catalyzes the N1-methylation of the pseudouridine corresponding to position 914 in M.jannaschii 16S rRNA.</text>
</comment>
<comment type="catalytic activity">
    <reaction evidence="1">
        <text>a pseudouridine in rRNA + S-adenosyl-L-methionine = an N(1)-methylpseudouridine in rRNA + S-adenosyl-L-homocysteine + H(+)</text>
        <dbReference type="Rhea" id="RHEA:46696"/>
        <dbReference type="Rhea" id="RHEA-COMP:11634"/>
        <dbReference type="Rhea" id="RHEA-COMP:13933"/>
        <dbReference type="ChEBI" id="CHEBI:15378"/>
        <dbReference type="ChEBI" id="CHEBI:57856"/>
        <dbReference type="ChEBI" id="CHEBI:59789"/>
        <dbReference type="ChEBI" id="CHEBI:65314"/>
        <dbReference type="ChEBI" id="CHEBI:74890"/>
    </reaction>
</comment>
<comment type="subunit">
    <text evidence="1">Homodimer.</text>
</comment>
<comment type="similarity">
    <text evidence="1">Belongs to the NEP1 family.</text>
</comment>
<comment type="sequence caution" evidence="2">
    <conflict type="erroneous initiation">
        <sequence resource="EMBL-CDS" id="CAC12251"/>
    </conflict>
</comment>